<proteinExistence type="evidence at transcript level"/>
<comment type="function">
    <text evidence="1 2 4">Cargo receptor for the autophagic turnover of ferritin (By similarity). Acts as an adapter for delivery of ferritin to lysosomes and autophagic degradation of ferritin, a process named ferritinophagy (By similarity). Plays a role in erythropoiesis, possibly by regulating hemin-induced erythroid differentiation (PubMed:26436293). Binds chromatin before initiation of DNA replication and detaches during replication (By similarity). Inhibits activation of DNA replication origins, possibly by obstructing DNA unwinding via interaction with the MCM2-7 complex (By similarity).</text>
</comment>
<comment type="subcellular location">
    <subcellularLocation>
        <location evidence="2">Nucleus</location>
    </subcellularLocation>
    <subcellularLocation>
        <location evidence="2">Chromosome</location>
    </subcellularLocation>
    <subcellularLocation>
        <location evidence="1">Cytoplasmic vesicle</location>
        <location evidence="1">Autophagosome</location>
    </subcellularLocation>
    <subcellularLocation>
        <location evidence="1">Autolysosome</location>
    </subcellularLocation>
</comment>
<comment type="tissue specificity">
    <text evidence="4">Expressed in the intermediate cell mass (ICM) at 24 hpf (hours post-fertilization) (PubMed:26436293). At 48 and 72 hpf, expressed in circulating erythrocytes visible in the yolk sac, heart, and liver (PubMed:26436293).</text>
</comment>
<comment type="disruption phenotype">
    <text evidence="4">Morpholino-mediated knockdown severely disrupts erythropoiesis.</text>
</comment>
<keyword id="KW-0158">Chromosome</keyword>
<keyword id="KW-0968">Cytoplasmic vesicle</keyword>
<keyword id="KW-0458">Lysosome</keyword>
<keyword id="KW-0539">Nucleus</keyword>
<keyword id="KW-0675">Receptor</keyword>
<keyword id="KW-1185">Reference proteome</keyword>
<accession>Q802X2</accession>
<accession>A0A8M2B394</accession>
<accession>Q6P0F7</accession>
<reference evidence="6" key="1">
    <citation type="submission" date="2003-02" db="EMBL/GenBank/DDBJ databases">
        <authorList>
            <consortium name="NIH - Zebrafish Gene Collection (ZGC) project"/>
        </authorList>
    </citation>
    <scope>NUCLEOTIDE SEQUENCE [LARGE SCALE MRNA]</scope>
    <source>
        <strain evidence="6">AB</strain>
    </source>
</reference>
<reference evidence="7" key="2">
    <citation type="journal article" date="2013" name="Nature">
        <title>The zebrafish reference genome sequence and its relationship to the human genome.</title>
        <authorList>
            <person name="Howe K."/>
            <person name="Clark M.D."/>
            <person name="Torroja C.F."/>
            <person name="Torrance J."/>
            <person name="Berthelot C."/>
            <person name="Muffato M."/>
            <person name="Collins J.E."/>
            <person name="Humphray S."/>
            <person name="McLaren K."/>
            <person name="Matthews L."/>
            <person name="McLaren S."/>
            <person name="Sealy I."/>
            <person name="Caccamo M."/>
            <person name="Churcher C."/>
            <person name="Scott C."/>
            <person name="Barrett J.C."/>
            <person name="Koch R."/>
            <person name="Rauch G.J."/>
            <person name="White S."/>
            <person name="Chow W."/>
            <person name="Kilian B."/>
            <person name="Quintais L.T."/>
            <person name="Guerra-Assuncao J.A."/>
            <person name="Zhou Y."/>
            <person name="Gu Y."/>
            <person name="Yen J."/>
            <person name="Vogel J.H."/>
            <person name="Eyre T."/>
            <person name="Redmond S."/>
            <person name="Banerjee R."/>
            <person name="Chi J."/>
            <person name="Fu B."/>
            <person name="Langley E."/>
            <person name="Maguire S.F."/>
            <person name="Laird G.K."/>
            <person name="Lloyd D."/>
            <person name="Kenyon E."/>
            <person name="Donaldson S."/>
            <person name="Sehra H."/>
            <person name="Almeida-King J."/>
            <person name="Loveland J."/>
            <person name="Trevanion S."/>
            <person name="Jones M."/>
            <person name="Quail M."/>
            <person name="Willey D."/>
            <person name="Hunt A."/>
            <person name="Burton J."/>
            <person name="Sims S."/>
            <person name="McLay K."/>
            <person name="Plumb B."/>
            <person name="Davis J."/>
            <person name="Clee C."/>
            <person name="Oliver K."/>
            <person name="Clark R."/>
            <person name="Riddle C."/>
            <person name="Elliot D."/>
            <person name="Threadgold G."/>
            <person name="Harden G."/>
            <person name="Ware D."/>
            <person name="Begum S."/>
            <person name="Mortimore B."/>
            <person name="Kerry G."/>
            <person name="Heath P."/>
            <person name="Phillimore B."/>
            <person name="Tracey A."/>
            <person name="Corby N."/>
            <person name="Dunn M."/>
            <person name="Johnson C."/>
            <person name="Wood J."/>
            <person name="Clark S."/>
            <person name="Pelan S."/>
            <person name="Griffiths G."/>
            <person name="Smith M."/>
            <person name="Glithero R."/>
            <person name="Howden P."/>
            <person name="Barker N."/>
            <person name="Lloyd C."/>
            <person name="Stevens C."/>
            <person name="Harley J."/>
            <person name="Holt K."/>
            <person name="Panagiotidis G."/>
            <person name="Lovell J."/>
            <person name="Beasley H."/>
            <person name="Henderson C."/>
            <person name="Gordon D."/>
            <person name="Auger K."/>
            <person name="Wright D."/>
            <person name="Collins J."/>
            <person name="Raisen C."/>
            <person name="Dyer L."/>
            <person name="Leung K."/>
            <person name="Robertson L."/>
            <person name="Ambridge K."/>
            <person name="Leongamornlert D."/>
            <person name="McGuire S."/>
            <person name="Gilderthorp R."/>
            <person name="Griffiths C."/>
            <person name="Manthravadi D."/>
            <person name="Nichol S."/>
            <person name="Barker G."/>
            <person name="Whitehead S."/>
            <person name="Kay M."/>
            <person name="Brown J."/>
            <person name="Murnane C."/>
            <person name="Gray E."/>
            <person name="Humphries M."/>
            <person name="Sycamore N."/>
            <person name="Barker D."/>
            <person name="Saunders D."/>
            <person name="Wallis J."/>
            <person name="Babbage A."/>
            <person name="Hammond S."/>
            <person name="Mashreghi-Mohammadi M."/>
            <person name="Barr L."/>
            <person name="Martin S."/>
            <person name="Wray P."/>
            <person name="Ellington A."/>
            <person name="Matthews N."/>
            <person name="Ellwood M."/>
            <person name="Woodmansey R."/>
            <person name="Clark G."/>
            <person name="Cooper J."/>
            <person name="Tromans A."/>
            <person name="Grafham D."/>
            <person name="Skuce C."/>
            <person name="Pandian R."/>
            <person name="Andrews R."/>
            <person name="Harrison E."/>
            <person name="Kimberley A."/>
            <person name="Garnett J."/>
            <person name="Fosker N."/>
            <person name="Hall R."/>
            <person name="Garner P."/>
            <person name="Kelly D."/>
            <person name="Bird C."/>
            <person name="Palmer S."/>
            <person name="Gehring I."/>
            <person name="Berger A."/>
            <person name="Dooley C.M."/>
            <person name="Ersan-Urun Z."/>
            <person name="Eser C."/>
            <person name="Geiger H."/>
            <person name="Geisler M."/>
            <person name="Karotki L."/>
            <person name="Kirn A."/>
            <person name="Konantz J."/>
            <person name="Konantz M."/>
            <person name="Oberlander M."/>
            <person name="Rudolph-Geiger S."/>
            <person name="Teucke M."/>
            <person name="Lanz C."/>
            <person name="Raddatz G."/>
            <person name="Osoegawa K."/>
            <person name="Zhu B."/>
            <person name="Rapp A."/>
            <person name="Widaa S."/>
            <person name="Langford C."/>
            <person name="Yang F."/>
            <person name="Schuster S.C."/>
            <person name="Carter N.P."/>
            <person name="Harrow J."/>
            <person name="Ning Z."/>
            <person name="Herrero J."/>
            <person name="Searle S.M."/>
            <person name="Enright A."/>
            <person name="Geisler R."/>
            <person name="Plasterk R.H."/>
            <person name="Lee C."/>
            <person name="Westerfield M."/>
            <person name="de Jong P.J."/>
            <person name="Zon L.I."/>
            <person name="Postlethwait J.H."/>
            <person name="Nusslein-Volhard C."/>
            <person name="Hubbard T.J."/>
            <person name="Roest Crollius H."/>
            <person name="Rogers J."/>
            <person name="Stemple D.L."/>
        </authorList>
    </citation>
    <scope>NUCLEOTIDE SEQUENCE [LARGE SCALE GENOMIC DNA]</scope>
    <source>
        <strain>Tuebingen</strain>
    </source>
</reference>
<reference evidence="8" key="3">
    <citation type="journal article" date="2018" name="Environ. Toxicol. Chem.">
        <title>Integrated in silico and in vivo approaches to investigate effects of BDE-99 mediated by the nuclear receptors on developing zebrafish.</title>
        <authorList>
            <person name="Zhang L."/>
            <person name="Jin Y."/>
            <person name="Han Z."/>
            <person name="Liu H."/>
            <person name="Shi L."/>
            <person name="Hua X."/>
            <person name="Doering J.A."/>
            <person name="Tang S."/>
            <person name="Giesy J.P."/>
            <person name="Yu H."/>
        </authorList>
    </citation>
    <scope>NUCLEOTIDE SEQUENCE [MRNA]</scope>
    <source>
        <strain evidence="8">AB</strain>
    </source>
</reference>
<reference evidence="5" key="4">
    <citation type="journal article" date="2015" name="Elife">
        <title>Ferritinophagy via NCOA4 is required for erythropoiesis and is regulated by iron dependent HERC2-mediated proteolysis.</title>
        <authorList>
            <person name="Mancias J.D."/>
            <person name="Pontano Vaites L."/>
            <person name="Nissim S."/>
            <person name="Biancur D.E."/>
            <person name="Kim A.J."/>
            <person name="Wang X."/>
            <person name="Liu Y."/>
            <person name="Goessling W."/>
            <person name="Kimmelman A.C."/>
            <person name="Harper J.W."/>
        </authorList>
    </citation>
    <scope>FUNCTION</scope>
    <scope>TISSUE SPECIFICITY</scope>
    <scope>DISRUPTION PHENOTYPE</scope>
</reference>
<feature type="chain" id="PRO_0000460476" description="Nuclear receptor coactivator 4">
    <location>
        <begin position="1"/>
        <end position="576"/>
    </location>
</feature>
<feature type="region of interest" description="Disordered" evidence="3">
    <location>
        <begin position="425"/>
        <end position="447"/>
    </location>
</feature>
<feature type="region of interest" description="Disordered" evidence="3">
    <location>
        <begin position="510"/>
        <end position="529"/>
    </location>
</feature>
<feature type="compositionally biased region" description="Polar residues" evidence="3">
    <location>
        <begin position="432"/>
        <end position="442"/>
    </location>
</feature>
<feature type="compositionally biased region" description="Basic and acidic residues" evidence="3">
    <location>
        <begin position="514"/>
        <end position="529"/>
    </location>
</feature>
<feature type="sequence conflict" description="In Ref. 2; CU019624/AAH65638." evidence="5" ref="2">
    <original>D</original>
    <variation>N</variation>
    <location>
        <position position="115"/>
    </location>
</feature>
<feature type="sequence conflict" description="In Ref. 2; CU019624/AAH65638." evidence="5" ref="2">
    <original>K</original>
    <variation>E</variation>
    <location>
        <position position="293"/>
    </location>
</feature>
<name>NCOA4_DANRE</name>
<evidence type="ECO:0000250" key="1">
    <source>
        <dbReference type="UniProtKB" id="Q13772"/>
    </source>
</evidence>
<evidence type="ECO:0000250" key="2">
    <source>
        <dbReference type="UniProtKB" id="Q5FWP7"/>
    </source>
</evidence>
<evidence type="ECO:0000256" key="3">
    <source>
        <dbReference type="SAM" id="MobiDB-lite"/>
    </source>
</evidence>
<evidence type="ECO:0000269" key="4">
    <source>
    </source>
</evidence>
<evidence type="ECO:0000305" key="5"/>
<evidence type="ECO:0000312" key="6">
    <source>
        <dbReference type="EMBL" id="AAH47166.1"/>
    </source>
</evidence>
<evidence type="ECO:0000312" key="7">
    <source>
        <dbReference type="Proteomes" id="UP000000437"/>
    </source>
</evidence>
<evidence type="ECO:0000312" key="8">
    <source>
        <dbReference type="RefSeq" id="NP_957423.1"/>
    </source>
</evidence>
<evidence type="ECO:0000312" key="9">
    <source>
        <dbReference type="ZFIN" id="ZDB-GENE-040426-689"/>
    </source>
</evidence>
<sequence>MSPMGQREKAALRQCIQARAQLDEAIADIIKAEVQLKSNSREVKSQLHSCISRHLEILRSREVWLLEQIDLVEQLKGETLHQQLQQLHSLKGQFDLLIHQLEYSGSNSLTTQLTDCLEKLSSLNLTPEETPEMSFQADAHTLRKAITSFGTIASEQMETSESFARPWLLQDCPVFFKKQKLDPERTTPLTEWLLGNHPVCSAPVKYHFSTNPHDWLLVSKESQEEKQLPAFDFQKAWGQLHDLESWLLKEKLPIRKRTCSSSSTFSIEMIDESDFNLDDVEDEQEKASDTFEKEELNKWLVNSSLVKPNQTNPDAERFKQIFKPFYESFSSSDWLSKSDCGSCCATRTTAVEIENLGKLKCLKTPPPSTPVTTPDPMEMWLHKTIPLESTCKANETCTSYAQCVCEDNCGKEALSAWLLKKEGRDKNGVPVNKNSTSKASSHQQEQQQKVQAILEAWLHPSNSAKSPDLTSLSAWAIPHIKLADPENSVENPLQAENWLHPAIKQISSATEMPNKAESKSAKDQDGKDNVEEDKWLLRKRVSAQERLGLPIVCDLFSCMKLGGDKEKWLHQAATQI</sequence>
<dbReference type="EMBL" id="CU019624">
    <property type="status" value="NOT_ANNOTATED_CDS"/>
    <property type="molecule type" value="Genomic_DNA"/>
</dbReference>
<dbReference type="EMBL" id="BC047166">
    <property type="protein sequence ID" value="AAH47166.1"/>
    <property type="molecule type" value="mRNA"/>
</dbReference>
<dbReference type="EMBL" id="BC165720">
    <property type="protein sequence ID" value="AAI65720.1"/>
    <property type="molecule type" value="mRNA"/>
</dbReference>
<dbReference type="EMBL" id="BC065638">
    <property type="protein sequence ID" value="AAH65638.1"/>
    <property type="molecule type" value="mRNA"/>
</dbReference>
<dbReference type="RefSeq" id="NP_957423.1">
    <property type="nucleotide sequence ID" value="NM_201129.1"/>
</dbReference>
<dbReference type="RefSeq" id="XP_005156551.1">
    <property type="nucleotide sequence ID" value="XM_005156494.3"/>
</dbReference>
<dbReference type="SMR" id="Q802X2"/>
<dbReference type="PaxDb" id="7955-ENSDARP00000013664"/>
<dbReference type="GeneID" id="394104"/>
<dbReference type="KEGG" id="dre:394104"/>
<dbReference type="AGR" id="ZFIN:ZDB-GENE-040426-689"/>
<dbReference type="CTD" id="8031"/>
<dbReference type="ZFIN" id="ZDB-GENE-040426-689">
    <property type="gene designation" value="ncoa4"/>
</dbReference>
<dbReference type="eggNOG" id="ENOG502QQ6V">
    <property type="taxonomic scope" value="Eukaryota"/>
</dbReference>
<dbReference type="HOGENOM" id="CLU_034170_0_0_1"/>
<dbReference type="OMA" id="WVTSERC"/>
<dbReference type="OrthoDB" id="6334544at2759"/>
<dbReference type="TreeFam" id="TF333204"/>
<dbReference type="Proteomes" id="UP000000437">
    <property type="component" value="Chromosome 13"/>
</dbReference>
<dbReference type="Bgee" id="ENSDARG00000021439">
    <property type="expression patterns" value="Expressed in cleaving embryo and 30 other cell types or tissues"/>
</dbReference>
<dbReference type="GO" id="GO:0044754">
    <property type="term" value="C:autolysosome"/>
    <property type="evidence" value="ECO:0007669"/>
    <property type="project" value="UniProtKB-SubCell"/>
</dbReference>
<dbReference type="GO" id="GO:0005776">
    <property type="term" value="C:autophagosome"/>
    <property type="evidence" value="ECO:0007669"/>
    <property type="project" value="UniProtKB-SubCell"/>
</dbReference>
<dbReference type="GO" id="GO:0005694">
    <property type="term" value="C:chromosome"/>
    <property type="evidence" value="ECO:0007669"/>
    <property type="project" value="UniProtKB-SubCell"/>
</dbReference>
<dbReference type="GO" id="GO:0031410">
    <property type="term" value="C:cytoplasmic vesicle"/>
    <property type="evidence" value="ECO:0007669"/>
    <property type="project" value="UniProtKB-KW"/>
</dbReference>
<dbReference type="GO" id="GO:0005634">
    <property type="term" value="C:nucleus"/>
    <property type="evidence" value="ECO:0007669"/>
    <property type="project" value="UniProtKB-SubCell"/>
</dbReference>
<dbReference type="GO" id="GO:0003713">
    <property type="term" value="F:transcription coactivator activity"/>
    <property type="evidence" value="ECO:0007669"/>
    <property type="project" value="InterPro"/>
</dbReference>
<dbReference type="GO" id="GO:0030218">
    <property type="term" value="P:erythrocyte differentiation"/>
    <property type="evidence" value="ECO:0000315"/>
    <property type="project" value="ZFIN"/>
</dbReference>
<dbReference type="GO" id="GO:0006879">
    <property type="term" value="P:intracellular iron ion homeostasis"/>
    <property type="evidence" value="ECO:0007669"/>
    <property type="project" value="InterPro"/>
</dbReference>
<dbReference type="InterPro" id="IPR039947">
    <property type="entry name" value="NCoA-4"/>
</dbReference>
<dbReference type="InterPro" id="IPR022174">
    <property type="entry name" value="NCOA4_N"/>
</dbReference>
<dbReference type="PANTHER" id="PTHR17085">
    <property type="entry name" value="NUCLEAR RECEPTOR COACTIVATOR 4"/>
    <property type="match status" value="1"/>
</dbReference>
<dbReference type="PANTHER" id="PTHR17085:SF3">
    <property type="entry name" value="NUCLEAR RECEPTOR COACTIVATOR 4"/>
    <property type="match status" value="1"/>
</dbReference>
<dbReference type="Pfam" id="PF12489">
    <property type="entry name" value="ARA70"/>
    <property type="match status" value="2"/>
</dbReference>
<gene>
    <name evidence="9" type="primary">ncoa4</name>
    <name evidence="6" type="synonym">zgc:55307</name>
    <name evidence="8" type="synonym">zgc:77270</name>
</gene>
<organism evidence="7">
    <name type="scientific">Danio rerio</name>
    <name type="common">Zebrafish</name>
    <name type="synonym">Brachydanio rerio</name>
    <dbReference type="NCBI Taxonomy" id="7955"/>
    <lineage>
        <taxon>Eukaryota</taxon>
        <taxon>Metazoa</taxon>
        <taxon>Chordata</taxon>
        <taxon>Craniata</taxon>
        <taxon>Vertebrata</taxon>
        <taxon>Euteleostomi</taxon>
        <taxon>Actinopterygii</taxon>
        <taxon>Neopterygii</taxon>
        <taxon>Teleostei</taxon>
        <taxon>Ostariophysi</taxon>
        <taxon>Cypriniformes</taxon>
        <taxon>Danionidae</taxon>
        <taxon>Danioninae</taxon>
        <taxon>Danio</taxon>
    </lineage>
</organism>
<protein>
    <recommendedName>
        <fullName evidence="5">Nuclear receptor coactivator 4</fullName>
        <shortName evidence="5">NCoA-4</shortName>
    </recommendedName>
    <alternativeName>
        <fullName evidence="5">Ferritin cargo receptor NCOA4</fullName>
    </alternativeName>
</protein>